<sequence>MNRPLRIGIVVGELSGDTLGEGFIKAIRARYPDAEFVGIGGPKMNALGCQSLFDMEELAVMGLVEVLGRLPRLLKVKAELVKYFTANPPDVFVGIDAPDFNLRLELSLKQAGIKTVHYVSPSVWAWRQNRIHGIAAATHLVLAFLPFEKAFYDKFNVPCEFIGHTLADSIPLASDKLAARQLLGLDEQRRWLAVLPGSRGSEMKMLAEPFIATCQKLQARYPDLGFVVALVNAKRRAQFEQAWQQVAPELNFVLVDDTARNVITAADAVMLASGTVALECMLLKRPMVVGYRVNAFTAFLAKRLLKTPYVSLPNILAGEELVKELLQDHCTVDNLYHEVSRLLESDNQALMDKFTEMHQWIRKDADQQAAQAVLHLIQK</sequence>
<keyword id="KW-0328">Glycosyltransferase</keyword>
<keyword id="KW-0441">Lipid A biosynthesis</keyword>
<keyword id="KW-0444">Lipid biosynthesis</keyword>
<keyword id="KW-0443">Lipid metabolism</keyword>
<keyword id="KW-1185">Reference proteome</keyword>
<keyword id="KW-0808">Transferase</keyword>
<organism>
    <name type="scientific">Vibrio cholerae serotype O1 (strain ATCC 39315 / El Tor Inaba N16961)</name>
    <dbReference type="NCBI Taxonomy" id="243277"/>
    <lineage>
        <taxon>Bacteria</taxon>
        <taxon>Pseudomonadati</taxon>
        <taxon>Pseudomonadota</taxon>
        <taxon>Gammaproteobacteria</taxon>
        <taxon>Vibrionales</taxon>
        <taxon>Vibrionaceae</taxon>
        <taxon>Vibrio</taxon>
    </lineage>
</organism>
<reference key="1">
    <citation type="journal article" date="2000" name="Nature">
        <title>DNA sequence of both chromosomes of the cholera pathogen Vibrio cholerae.</title>
        <authorList>
            <person name="Heidelberg J.F."/>
            <person name="Eisen J.A."/>
            <person name="Nelson W.C."/>
            <person name="Clayton R.A."/>
            <person name="Gwinn M.L."/>
            <person name="Dodson R.J."/>
            <person name="Haft D.H."/>
            <person name="Hickey E.K."/>
            <person name="Peterson J.D."/>
            <person name="Umayam L.A."/>
            <person name="Gill S.R."/>
            <person name="Nelson K.E."/>
            <person name="Read T.D."/>
            <person name="Tettelin H."/>
            <person name="Richardson D.L."/>
            <person name="Ermolaeva M.D."/>
            <person name="Vamathevan J.J."/>
            <person name="Bass S."/>
            <person name="Qin H."/>
            <person name="Dragoi I."/>
            <person name="Sellers P."/>
            <person name="McDonald L.A."/>
            <person name="Utterback T.R."/>
            <person name="Fleischmann R.D."/>
            <person name="Nierman W.C."/>
            <person name="White O."/>
            <person name="Salzberg S.L."/>
            <person name="Smith H.O."/>
            <person name="Colwell R.R."/>
            <person name="Mekalanos J.J."/>
            <person name="Venter J.C."/>
            <person name="Fraser C.M."/>
        </authorList>
    </citation>
    <scope>NUCLEOTIDE SEQUENCE [LARGE SCALE GENOMIC DNA]</scope>
    <source>
        <strain>ATCC 39315 / El Tor Inaba N16961</strain>
    </source>
</reference>
<protein>
    <recommendedName>
        <fullName>Lipid-A-disaccharide synthase</fullName>
        <ecNumber>2.4.1.182</ecNumber>
    </recommendedName>
</protein>
<evidence type="ECO:0000250" key="1"/>
<evidence type="ECO:0000305" key="2"/>
<comment type="function">
    <text evidence="1">Condensation of UDP-2,3-diacylglucosamine and 2,3-diacylglucosamine-1-phosphate to form lipid A disaccharide, a precursor of lipid A, a phosphorylated glycolipid that anchors the lipopolysaccharide to the outer membrane of the cell.</text>
</comment>
<comment type="catalytic activity">
    <reaction>
        <text>a lipid X + a UDP-2-N,3-O-bis[(3R)-3-hydroxyacyl]-alpha-D-glucosamine = a lipid A disaccharide + UDP + H(+)</text>
        <dbReference type="Rhea" id="RHEA:67828"/>
        <dbReference type="ChEBI" id="CHEBI:15378"/>
        <dbReference type="ChEBI" id="CHEBI:58223"/>
        <dbReference type="ChEBI" id="CHEBI:137748"/>
        <dbReference type="ChEBI" id="CHEBI:176338"/>
        <dbReference type="ChEBI" id="CHEBI:176343"/>
        <dbReference type="EC" id="2.4.1.182"/>
    </reaction>
</comment>
<comment type="pathway">
    <text>Bacterial outer membrane biogenesis; LPS lipid A biosynthesis.</text>
</comment>
<comment type="similarity">
    <text evidence="2">Belongs to the LpxB family.</text>
</comment>
<feature type="chain" id="PRO_0000190188" description="Lipid-A-disaccharide synthase">
    <location>
        <begin position="1"/>
        <end position="379"/>
    </location>
</feature>
<accession>Q9KPW5</accession>
<dbReference type="EC" id="2.4.1.182"/>
<dbReference type="EMBL" id="AE003852">
    <property type="protein sequence ID" value="AAF95391.1"/>
    <property type="molecule type" value="Genomic_DNA"/>
</dbReference>
<dbReference type="PIR" id="A82101">
    <property type="entry name" value="A82101"/>
</dbReference>
<dbReference type="RefSeq" id="NP_231878.1">
    <property type="nucleotide sequence ID" value="NC_002505.1"/>
</dbReference>
<dbReference type="RefSeq" id="WP_001081509.1">
    <property type="nucleotide sequence ID" value="NZ_LT906614.1"/>
</dbReference>
<dbReference type="SMR" id="Q9KPW5"/>
<dbReference type="STRING" id="243277.VC_2247"/>
<dbReference type="CAZy" id="GT19">
    <property type="family name" value="Glycosyltransferase Family 19"/>
</dbReference>
<dbReference type="DNASU" id="2613169"/>
<dbReference type="EnsemblBacteria" id="AAF95391">
    <property type="protein sequence ID" value="AAF95391"/>
    <property type="gene ID" value="VC_2247"/>
</dbReference>
<dbReference type="KEGG" id="vch:VC_2247"/>
<dbReference type="PATRIC" id="fig|243277.26.peg.2143"/>
<dbReference type="eggNOG" id="COG0763">
    <property type="taxonomic scope" value="Bacteria"/>
</dbReference>
<dbReference type="HOGENOM" id="CLU_036577_3_0_6"/>
<dbReference type="BioCyc" id="MetaCyc:FY484_RS11230-MONOMER"/>
<dbReference type="UniPathway" id="UPA00973"/>
<dbReference type="Proteomes" id="UP000000584">
    <property type="component" value="Chromosome 1"/>
</dbReference>
<dbReference type="GO" id="GO:0016020">
    <property type="term" value="C:membrane"/>
    <property type="evidence" value="ECO:0007669"/>
    <property type="project" value="GOC"/>
</dbReference>
<dbReference type="GO" id="GO:0008915">
    <property type="term" value="F:lipid-A-disaccharide synthase activity"/>
    <property type="evidence" value="ECO:0007669"/>
    <property type="project" value="UniProtKB-UniRule"/>
</dbReference>
<dbReference type="GO" id="GO:0005543">
    <property type="term" value="F:phospholipid binding"/>
    <property type="evidence" value="ECO:0000318"/>
    <property type="project" value="GO_Central"/>
</dbReference>
<dbReference type="GO" id="GO:0009245">
    <property type="term" value="P:lipid A biosynthetic process"/>
    <property type="evidence" value="ECO:0000318"/>
    <property type="project" value="GO_Central"/>
</dbReference>
<dbReference type="HAMAP" id="MF_00392">
    <property type="entry name" value="LpxB"/>
    <property type="match status" value="1"/>
</dbReference>
<dbReference type="InterPro" id="IPR003835">
    <property type="entry name" value="Glyco_trans_19"/>
</dbReference>
<dbReference type="NCBIfam" id="TIGR00215">
    <property type="entry name" value="lpxB"/>
    <property type="match status" value="1"/>
</dbReference>
<dbReference type="PANTHER" id="PTHR30372">
    <property type="entry name" value="LIPID-A-DISACCHARIDE SYNTHASE"/>
    <property type="match status" value="1"/>
</dbReference>
<dbReference type="PANTHER" id="PTHR30372:SF4">
    <property type="entry name" value="LIPID-A-DISACCHARIDE SYNTHASE, MITOCHONDRIAL-RELATED"/>
    <property type="match status" value="1"/>
</dbReference>
<dbReference type="Pfam" id="PF02684">
    <property type="entry name" value="LpxB"/>
    <property type="match status" value="1"/>
</dbReference>
<dbReference type="SUPFAM" id="SSF53756">
    <property type="entry name" value="UDP-Glycosyltransferase/glycogen phosphorylase"/>
    <property type="match status" value="1"/>
</dbReference>
<gene>
    <name type="primary">lpxB</name>
    <name type="ordered locus">VC_2247</name>
</gene>
<name>LPXB_VIBCH</name>
<proteinExistence type="inferred from homology"/>